<sequence length="157" mass="18091">MKIVLLVVGKTDSKLMAQATEEYIRRLSHYVSFEVEVIPDVRLGSKLSSEQQKDAEGREILARLRPSDSTVLLDERGREYSSMEFSAFLQKKMLTGTRRMVFVIGGPYGFSPAVQEAVADRISLSRMTFSHQMIRLFFTEQVYRAMTILNHEPYHHE</sequence>
<dbReference type="EC" id="2.1.1.177" evidence="1"/>
<dbReference type="EMBL" id="AP009380">
    <property type="protein sequence ID" value="BAG32658.1"/>
    <property type="molecule type" value="Genomic_DNA"/>
</dbReference>
<dbReference type="RefSeq" id="WP_012457274.1">
    <property type="nucleotide sequence ID" value="NC_010729.1"/>
</dbReference>
<dbReference type="SMR" id="B2RH13"/>
<dbReference type="GeneID" id="29255391"/>
<dbReference type="KEGG" id="pgn:PGN_0139"/>
<dbReference type="eggNOG" id="COG1576">
    <property type="taxonomic scope" value="Bacteria"/>
</dbReference>
<dbReference type="HOGENOM" id="CLU_100552_2_0_10"/>
<dbReference type="OrthoDB" id="9806643at2"/>
<dbReference type="BioCyc" id="PGIN431947:G1G2V-158-MONOMER"/>
<dbReference type="Proteomes" id="UP000008842">
    <property type="component" value="Chromosome"/>
</dbReference>
<dbReference type="GO" id="GO:0005737">
    <property type="term" value="C:cytoplasm"/>
    <property type="evidence" value="ECO:0007669"/>
    <property type="project" value="UniProtKB-SubCell"/>
</dbReference>
<dbReference type="GO" id="GO:0070038">
    <property type="term" value="F:rRNA (pseudouridine-N3-)-methyltransferase activity"/>
    <property type="evidence" value="ECO:0007669"/>
    <property type="project" value="UniProtKB-UniRule"/>
</dbReference>
<dbReference type="CDD" id="cd18081">
    <property type="entry name" value="RlmH-like"/>
    <property type="match status" value="1"/>
</dbReference>
<dbReference type="Gene3D" id="3.40.1280.10">
    <property type="match status" value="1"/>
</dbReference>
<dbReference type="HAMAP" id="MF_00658">
    <property type="entry name" value="23SrRNA_methyltr_H"/>
    <property type="match status" value="1"/>
</dbReference>
<dbReference type="InterPro" id="IPR029028">
    <property type="entry name" value="Alpha/beta_knot_MTases"/>
</dbReference>
<dbReference type="InterPro" id="IPR003742">
    <property type="entry name" value="RlmH-like"/>
</dbReference>
<dbReference type="InterPro" id="IPR029026">
    <property type="entry name" value="tRNA_m1G_MTases_N"/>
</dbReference>
<dbReference type="NCBIfam" id="NF000990">
    <property type="entry name" value="PRK00103.2-4"/>
    <property type="match status" value="1"/>
</dbReference>
<dbReference type="PANTHER" id="PTHR33603">
    <property type="entry name" value="METHYLTRANSFERASE"/>
    <property type="match status" value="1"/>
</dbReference>
<dbReference type="PANTHER" id="PTHR33603:SF1">
    <property type="entry name" value="RIBOSOMAL RNA LARGE SUBUNIT METHYLTRANSFERASE H"/>
    <property type="match status" value="1"/>
</dbReference>
<dbReference type="Pfam" id="PF02590">
    <property type="entry name" value="SPOUT_MTase"/>
    <property type="match status" value="1"/>
</dbReference>
<dbReference type="PIRSF" id="PIRSF004505">
    <property type="entry name" value="MT_bac"/>
    <property type="match status" value="1"/>
</dbReference>
<dbReference type="SUPFAM" id="SSF75217">
    <property type="entry name" value="alpha/beta knot"/>
    <property type="match status" value="1"/>
</dbReference>
<proteinExistence type="inferred from homology"/>
<reference key="1">
    <citation type="journal article" date="2008" name="DNA Res.">
        <title>Determination of the genome sequence of Porphyromonas gingivalis strain ATCC 33277 and genomic comparison with strain W83 revealed extensive genome rearrangements in P. gingivalis.</title>
        <authorList>
            <person name="Naito M."/>
            <person name="Hirakawa H."/>
            <person name="Yamashita A."/>
            <person name="Ohara N."/>
            <person name="Shoji M."/>
            <person name="Yukitake H."/>
            <person name="Nakayama K."/>
            <person name="Toh H."/>
            <person name="Yoshimura F."/>
            <person name="Kuhara S."/>
            <person name="Hattori M."/>
            <person name="Hayashi T."/>
            <person name="Nakayama K."/>
        </authorList>
    </citation>
    <scope>NUCLEOTIDE SEQUENCE [LARGE SCALE GENOMIC DNA]</scope>
    <source>
        <strain>ATCC 33277 / DSM 20709 / CIP 103683 / JCM 12257 / NCTC 11834 / 2561</strain>
    </source>
</reference>
<gene>
    <name evidence="1" type="primary">rlmH</name>
    <name type="ordered locus">PGN_0139</name>
</gene>
<keyword id="KW-0963">Cytoplasm</keyword>
<keyword id="KW-0489">Methyltransferase</keyword>
<keyword id="KW-0698">rRNA processing</keyword>
<keyword id="KW-0949">S-adenosyl-L-methionine</keyword>
<keyword id="KW-0808">Transferase</keyword>
<evidence type="ECO:0000255" key="1">
    <source>
        <dbReference type="HAMAP-Rule" id="MF_00658"/>
    </source>
</evidence>
<protein>
    <recommendedName>
        <fullName evidence="1">Ribosomal RNA large subunit methyltransferase H</fullName>
        <ecNumber evidence="1">2.1.1.177</ecNumber>
    </recommendedName>
    <alternativeName>
        <fullName evidence="1">23S rRNA (pseudouridine1915-N3)-methyltransferase</fullName>
    </alternativeName>
    <alternativeName>
        <fullName evidence="1">23S rRNA m3Psi1915 methyltransferase</fullName>
    </alternativeName>
    <alternativeName>
        <fullName evidence="1">rRNA (pseudouridine-N3-)-methyltransferase RlmH</fullName>
    </alternativeName>
</protein>
<name>RLMH_PORG3</name>
<organism>
    <name type="scientific">Porphyromonas gingivalis (strain ATCC 33277 / DSM 20709 / CIP 103683 / JCM 12257 / NCTC 11834 / 2561)</name>
    <dbReference type="NCBI Taxonomy" id="431947"/>
    <lineage>
        <taxon>Bacteria</taxon>
        <taxon>Pseudomonadati</taxon>
        <taxon>Bacteroidota</taxon>
        <taxon>Bacteroidia</taxon>
        <taxon>Bacteroidales</taxon>
        <taxon>Porphyromonadaceae</taxon>
        <taxon>Porphyromonas</taxon>
    </lineage>
</organism>
<feature type="chain" id="PRO_0000366636" description="Ribosomal RNA large subunit methyltransferase H">
    <location>
        <begin position="1"/>
        <end position="157"/>
    </location>
</feature>
<feature type="binding site" evidence="1">
    <location>
        <position position="73"/>
    </location>
    <ligand>
        <name>S-adenosyl-L-methionine</name>
        <dbReference type="ChEBI" id="CHEBI:59789"/>
    </ligand>
</feature>
<feature type="binding site" evidence="1">
    <location>
        <position position="105"/>
    </location>
    <ligand>
        <name>S-adenosyl-L-methionine</name>
        <dbReference type="ChEBI" id="CHEBI:59789"/>
    </ligand>
</feature>
<feature type="binding site" evidence="1">
    <location>
        <begin position="124"/>
        <end position="129"/>
    </location>
    <ligand>
        <name>S-adenosyl-L-methionine</name>
        <dbReference type="ChEBI" id="CHEBI:59789"/>
    </ligand>
</feature>
<accession>B2RH13</accession>
<comment type="function">
    <text evidence="1">Specifically methylates the pseudouridine at position 1915 (m3Psi1915) in 23S rRNA.</text>
</comment>
<comment type="catalytic activity">
    <reaction evidence="1">
        <text>pseudouridine(1915) in 23S rRNA + S-adenosyl-L-methionine = N(3)-methylpseudouridine(1915) in 23S rRNA + S-adenosyl-L-homocysteine + H(+)</text>
        <dbReference type="Rhea" id="RHEA:42752"/>
        <dbReference type="Rhea" id="RHEA-COMP:10221"/>
        <dbReference type="Rhea" id="RHEA-COMP:10222"/>
        <dbReference type="ChEBI" id="CHEBI:15378"/>
        <dbReference type="ChEBI" id="CHEBI:57856"/>
        <dbReference type="ChEBI" id="CHEBI:59789"/>
        <dbReference type="ChEBI" id="CHEBI:65314"/>
        <dbReference type="ChEBI" id="CHEBI:74486"/>
        <dbReference type="EC" id="2.1.1.177"/>
    </reaction>
</comment>
<comment type="subunit">
    <text evidence="1">Homodimer.</text>
</comment>
<comment type="subcellular location">
    <subcellularLocation>
        <location evidence="1">Cytoplasm</location>
    </subcellularLocation>
</comment>
<comment type="similarity">
    <text evidence="1">Belongs to the RNA methyltransferase RlmH family.</text>
</comment>